<evidence type="ECO:0000255" key="1">
    <source>
        <dbReference type="HAMAP-Rule" id="MF_00114"/>
    </source>
</evidence>
<dbReference type="EC" id="4.1.2.4" evidence="1"/>
<dbReference type="EMBL" id="AP008230">
    <property type="protein sequence ID" value="BAE84893.1"/>
    <property type="molecule type" value="Genomic_DNA"/>
</dbReference>
<dbReference type="SMR" id="Q24SU9"/>
<dbReference type="STRING" id="138119.DSY3104"/>
<dbReference type="KEGG" id="dsy:DSY3104"/>
<dbReference type="eggNOG" id="COG0274">
    <property type="taxonomic scope" value="Bacteria"/>
</dbReference>
<dbReference type="HOGENOM" id="CLU_053595_0_2_9"/>
<dbReference type="UniPathway" id="UPA00002">
    <property type="reaction ID" value="UER00468"/>
</dbReference>
<dbReference type="Proteomes" id="UP000001946">
    <property type="component" value="Chromosome"/>
</dbReference>
<dbReference type="GO" id="GO:0005737">
    <property type="term" value="C:cytoplasm"/>
    <property type="evidence" value="ECO:0007669"/>
    <property type="project" value="UniProtKB-SubCell"/>
</dbReference>
<dbReference type="GO" id="GO:0004139">
    <property type="term" value="F:deoxyribose-phosphate aldolase activity"/>
    <property type="evidence" value="ECO:0007669"/>
    <property type="project" value="UniProtKB-UniRule"/>
</dbReference>
<dbReference type="GO" id="GO:0006018">
    <property type="term" value="P:2-deoxyribose 1-phosphate catabolic process"/>
    <property type="evidence" value="ECO:0007669"/>
    <property type="project" value="UniProtKB-UniRule"/>
</dbReference>
<dbReference type="GO" id="GO:0016052">
    <property type="term" value="P:carbohydrate catabolic process"/>
    <property type="evidence" value="ECO:0007669"/>
    <property type="project" value="TreeGrafter"/>
</dbReference>
<dbReference type="GO" id="GO:0009264">
    <property type="term" value="P:deoxyribonucleotide catabolic process"/>
    <property type="evidence" value="ECO:0007669"/>
    <property type="project" value="InterPro"/>
</dbReference>
<dbReference type="CDD" id="cd00959">
    <property type="entry name" value="DeoC"/>
    <property type="match status" value="1"/>
</dbReference>
<dbReference type="FunFam" id="3.20.20.70:FF:000044">
    <property type="entry name" value="Deoxyribose-phosphate aldolase"/>
    <property type="match status" value="1"/>
</dbReference>
<dbReference type="Gene3D" id="3.20.20.70">
    <property type="entry name" value="Aldolase class I"/>
    <property type="match status" value="1"/>
</dbReference>
<dbReference type="HAMAP" id="MF_00114">
    <property type="entry name" value="DeoC_type1"/>
    <property type="match status" value="1"/>
</dbReference>
<dbReference type="InterPro" id="IPR013785">
    <property type="entry name" value="Aldolase_TIM"/>
</dbReference>
<dbReference type="InterPro" id="IPR011343">
    <property type="entry name" value="DeoC"/>
</dbReference>
<dbReference type="InterPro" id="IPR002915">
    <property type="entry name" value="DeoC/FbaB/LacD_aldolase"/>
</dbReference>
<dbReference type="InterPro" id="IPR028581">
    <property type="entry name" value="DeoC_typeI"/>
</dbReference>
<dbReference type="NCBIfam" id="TIGR00126">
    <property type="entry name" value="deoC"/>
    <property type="match status" value="1"/>
</dbReference>
<dbReference type="PANTHER" id="PTHR10889">
    <property type="entry name" value="DEOXYRIBOSE-PHOSPHATE ALDOLASE"/>
    <property type="match status" value="1"/>
</dbReference>
<dbReference type="PANTHER" id="PTHR10889:SF1">
    <property type="entry name" value="DEOXYRIBOSE-PHOSPHATE ALDOLASE"/>
    <property type="match status" value="1"/>
</dbReference>
<dbReference type="Pfam" id="PF01791">
    <property type="entry name" value="DeoC"/>
    <property type="match status" value="1"/>
</dbReference>
<dbReference type="PIRSF" id="PIRSF001357">
    <property type="entry name" value="DeoC"/>
    <property type="match status" value="1"/>
</dbReference>
<dbReference type="SMART" id="SM01133">
    <property type="entry name" value="DeoC"/>
    <property type="match status" value="1"/>
</dbReference>
<dbReference type="SUPFAM" id="SSF51569">
    <property type="entry name" value="Aldolase"/>
    <property type="match status" value="1"/>
</dbReference>
<gene>
    <name evidence="1" type="primary">deoC</name>
    <name type="ordered locus">DSY3104</name>
</gene>
<proteinExistence type="inferred from homology"/>
<protein>
    <recommendedName>
        <fullName evidence="1">Deoxyribose-phosphate aldolase</fullName>
        <shortName evidence="1">DERA</shortName>
        <ecNumber evidence="1">4.1.2.4</ecNumber>
    </recommendedName>
    <alternativeName>
        <fullName evidence="1">2-deoxy-D-ribose 5-phosphate aldolase</fullName>
    </alternativeName>
    <alternativeName>
        <fullName evidence="1">Phosphodeoxyriboaldolase</fullName>
        <shortName evidence="1">Deoxyriboaldolase</shortName>
    </alternativeName>
</protein>
<comment type="function">
    <text evidence="1">Catalyzes a reversible aldol reaction between acetaldehyde and D-glyceraldehyde 3-phosphate to generate 2-deoxy-D-ribose 5-phosphate.</text>
</comment>
<comment type="catalytic activity">
    <reaction evidence="1">
        <text>2-deoxy-D-ribose 5-phosphate = D-glyceraldehyde 3-phosphate + acetaldehyde</text>
        <dbReference type="Rhea" id="RHEA:12821"/>
        <dbReference type="ChEBI" id="CHEBI:15343"/>
        <dbReference type="ChEBI" id="CHEBI:59776"/>
        <dbReference type="ChEBI" id="CHEBI:62877"/>
        <dbReference type="EC" id="4.1.2.4"/>
    </reaction>
</comment>
<comment type="pathway">
    <text evidence="1">Carbohydrate degradation; 2-deoxy-D-ribose 1-phosphate degradation; D-glyceraldehyde 3-phosphate and acetaldehyde from 2-deoxy-alpha-D-ribose 1-phosphate: step 2/2.</text>
</comment>
<comment type="subcellular location">
    <subcellularLocation>
        <location evidence="1">Cytoplasm</location>
    </subcellularLocation>
</comment>
<comment type="similarity">
    <text evidence="1">Belongs to the DeoC/FbaB aldolase family. DeoC type 1 subfamily.</text>
</comment>
<keyword id="KW-0963">Cytoplasm</keyword>
<keyword id="KW-0456">Lyase</keyword>
<keyword id="KW-1185">Reference proteome</keyword>
<keyword id="KW-0704">Schiff base</keyword>
<organism>
    <name type="scientific">Desulfitobacterium hafniense (strain Y51)</name>
    <dbReference type="NCBI Taxonomy" id="138119"/>
    <lineage>
        <taxon>Bacteria</taxon>
        <taxon>Bacillati</taxon>
        <taxon>Bacillota</taxon>
        <taxon>Clostridia</taxon>
        <taxon>Eubacteriales</taxon>
        <taxon>Desulfitobacteriaceae</taxon>
        <taxon>Desulfitobacterium</taxon>
    </lineage>
</organism>
<name>DEOC_DESHY</name>
<sequence>MRTMNLAGMIDHTFLKPEATEKDIVNLCHEAKQHKFATVCINPAYICTAAKLLHGSGVGVATVIGFPLGATMTEIKVQEIFAAKAHGAREVDIVINIGWAKSGNWEAVAKDITRAVEAAHCCGVTIKVIIETSLLTEEEKQKAAEIVKASGADYIKTSTGFAGGGATVEDVRNLKAWVGQSVKVKASGGIRSRETALQMVEAGADRLGTSSGVQIITV</sequence>
<reference key="1">
    <citation type="journal article" date="2006" name="J. Bacteriol.">
        <title>Complete genome sequence of the dehalorespiring bacterium Desulfitobacterium hafniense Y51 and comparison with Dehalococcoides ethenogenes 195.</title>
        <authorList>
            <person name="Nonaka H."/>
            <person name="Keresztes G."/>
            <person name="Shinoda Y."/>
            <person name="Ikenaga Y."/>
            <person name="Abe M."/>
            <person name="Naito K."/>
            <person name="Inatomi K."/>
            <person name="Furukawa K."/>
            <person name="Inui M."/>
            <person name="Yukawa H."/>
        </authorList>
    </citation>
    <scope>NUCLEOTIDE SEQUENCE [LARGE SCALE GENOMIC DNA]</scope>
    <source>
        <strain>Y51</strain>
    </source>
</reference>
<feature type="chain" id="PRO_1000015315" description="Deoxyribose-phosphate aldolase">
    <location>
        <begin position="1"/>
        <end position="218"/>
    </location>
</feature>
<feature type="active site" description="Proton donor/acceptor" evidence="1">
    <location>
        <position position="92"/>
    </location>
</feature>
<feature type="active site" description="Schiff-base intermediate with acetaldehyde" evidence="1">
    <location>
        <position position="156"/>
    </location>
</feature>
<feature type="active site" description="Proton donor/acceptor" evidence="1">
    <location>
        <position position="185"/>
    </location>
</feature>
<accession>Q24SU9</accession>